<protein>
    <recommendedName>
        <fullName evidence="1">UDP-3-O-acylglucosamine N-acyltransferase</fullName>
        <ecNumber evidence="1">2.3.1.191</ecNumber>
    </recommendedName>
</protein>
<keyword id="KW-0012">Acyltransferase</keyword>
<keyword id="KW-0441">Lipid A biosynthesis</keyword>
<keyword id="KW-0444">Lipid biosynthesis</keyword>
<keyword id="KW-0443">Lipid metabolism</keyword>
<keyword id="KW-1185">Reference proteome</keyword>
<keyword id="KW-0677">Repeat</keyword>
<keyword id="KW-0808">Transferase</keyword>
<accession>Q0VQE7</accession>
<comment type="function">
    <text evidence="1">Catalyzes the N-acylation of UDP-3-O-acylglucosamine using 3-hydroxyacyl-ACP as the acyl donor. Is involved in the biosynthesis of lipid A, a phosphorylated glycolipid that anchors the lipopolysaccharide to the outer membrane of the cell.</text>
</comment>
<comment type="catalytic activity">
    <reaction evidence="1">
        <text>a UDP-3-O-[(3R)-3-hydroxyacyl]-alpha-D-glucosamine + a (3R)-hydroxyacyl-[ACP] = a UDP-2-N,3-O-bis[(3R)-3-hydroxyacyl]-alpha-D-glucosamine + holo-[ACP] + H(+)</text>
        <dbReference type="Rhea" id="RHEA:53836"/>
        <dbReference type="Rhea" id="RHEA-COMP:9685"/>
        <dbReference type="Rhea" id="RHEA-COMP:9945"/>
        <dbReference type="ChEBI" id="CHEBI:15378"/>
        <dbReference type="ChEBI" id="CHEBI:64479"/>
        <dbReference type="ChEBI" id="CHEBI:78827"/>
        <dbReference type="ChEBI" id="CHEBI:137740"/>
        <dbReference type="ChEBI" id="CHEBI:137748"/>
        <dbReference type="EC" id="2.3.1.191"/>
    </reaction>
</comment>
<comment type="pathway">
    <text evidence="1">Bacterial outer membrane biogenesis; LPS lipid A biosynthesis.</text>
</comment>
<comment type="subunit">
    <text evidence="1">Homotrimer.</text>
</comment>
<comment type="similarity">
    <text evidence="1">Belongs to the transferase hexapeptide repeat family. LpxD subfamily.</text>
</comment>
<name>LPXD_ALCBS</name>
<dbReference type="EC" id="2.3.1.191" evidence="1"/>
<dbReference type="EMBL" id="AM286690">
    <property type="protein sequence ID" value="CAL16601.1"/>
    <property type="molecule type" value="Genomic_DNA"/>
</dbReference>
<dbReference type="RefSeq" id="WP_011588436.1">
    <property type="nucleotide sequence ID" value="NC_008260.1"/>
</dbReference>
<dbReference type="SMR" id="Q0VQE7"/>
<dbReference type="STRING" id="393595.ABO_1153"/>
<dbReference type="KEGG" id="abo:ABO_1153"/>
<dbReference type="eggNOG" id="COG1044">
    <property type="taxonomic scope" value="Bacteria"/>
</dbReference>
<dbReference type="HOGENOM" id="CLU_049865_0_1_6"/>
<dbReference type="OrthoDB" id="9784739at2"/>
<dbReference type="UniPathway" id="UPA00973"/>
<dbReference type="Proteomes" id="UP000008871">
    <property type="component" value="Chromosome"/>
</dbReference>
<dbReference type="GO" id="GO:0016020">
    <property type="term" value="C:membrane"/>
    <property type="evidence" value="ECO:0007669"/>
    <property type="project" value="GOC"/>
</dbReference>
<dbReference type="GO" id="GO:0016410">
    <property type="term" value="F:N-acyltransferase activity"/>
    <property type="evidence" value="ECO:0007669"/>
    <property type="project" value="InterPro"/>
</dbReference>
<dbReference type="GO" id="GO:0009245">
    <property type="term" value="P:lipid A biosynthetic process"/>
    <property type="evidence" value="ECO:0007669"/>
    <property type="project" value="UniProtKB-UniRule"/>
</dbReference>
<dbReference type="CDD" id="cd03352">
    <property type="entry name" value="LbH_LpxD"/>
    <property type="match status" value="1"/>
</dbReference>
<dbReference type="Gene3D" id="1.20.5.170">
    <property type="match status" value="1"/>
</dbReference>
<dbReference type="Gene3D" id="2.160.10.10">
    <property type="entry name" value="Hexapeptide repeat proteins"/>
    <property type="match status" value="1"/>
</dbReference>
<dbReference type="Gene3D" id="3.40.1390.10">
    <property type="entry name" value="MurE/MurF, N-terminal domain"/>
    <property type="match status" value="1"/>
</dbReference>
<dbReference type="HAMAP" id="MF_00523">
    <property type="entry name" value="LpxD"/>
    <property type="match status" value="1"/>
</dbReference>
<dbReference type="InterPro" id="IPR001451">
    <property type="entry name" value="Hexapep"/>
</dbReference>
<dbReference type="InterPro" id="IPR007691">
    <property type="entry name" value="LpxD"/>
</dbReference>
<dbReference type="InterPro" id="IPR011004">
    <property type="entry name" value="Trimer_LpxA-like_sf"/>
</dbReference>
<dbReference type="InterPro" id="IPR020573">
    <property type="entry name" value="UDP_GlcNAc_AcTrfase_non-rep"/>
</dbReference>
<dbReference type="NCBIfam" id="TIGR01853">
    <property type="entry name" value="lipid_A_lpxD"/>
    <property type="match status" value="1"/>
</dbReference>
<dbReference type="NCBIfam" id="NF002060">
    <property type="entry name" value="PRK00892.1"/>
    <property type="match status" value="1"/>
</dbReference>
<dbReference type="PANTHER" id="PTHR43378">
    <property type="entry name" value="UDP-3-O-ACYLGLUCOSAMINE N-ACYLTRANSFERASE"/>
    <property type="match status" value="1"/>
</dbReference>
<dbReference type="PANTHER" id="PTHR43378:SF2">
    <property type="entry name" value="UDP-3-O-ACYLGLUCOSAMINE N-ACYLTRANSFERASE 1, MITOCHONDRIAL-RELATED"/>
    <property type="match status" value="1"/>
</dbReference>
<dbReference type="Pfam" id="PF00132">
    <property type="entry name" value="Hexapep"/>
    <property type="match status" value="2"/>
</dbReference>
<dbReference type="Pfam" id="PF04613">
    <property type="entry name" value="LpxD"/>
    <property type="match status" value="1"/>
</dbReference>
<dbReference type="SUPFAM" id="SSF51161">
    <property type="entry name" value="Trimeric LpxA-like enzymes"/>
    <property type="match status" value="1"/>
</dbReference>
<gene>
    <name evidence="1" type="primary">lpxD</name>
    <name type="ordered locus">ABO_1153</name>
</gene>
<sequence>MLTLGELAKKLDAELIGEASHVVDGLGTIQSAGPSQLTFLANPRYRSFLEQTNAGAVLIPESQREFCPVPALIVKDPYLSFAKASAFFEVAPQVQPGVHPAAVVDATAQIHTSASIGPNAVVEAGVIVGEGAVIMANSVVGAGCHIGDQCRIWPNVTIYHGVTLGPRTTIHANCVIGGDGFGFAFNGAGWTKLHQVGGVTIGADVEIGAGTTVDRGAIEDTIIGDGVILDNQIQVAHNVVIGDHTAIAGKAGIAGSAKIGSFCLIGGAAGIAGHIEVCDKVQILAMSLVSSSIKEPGTYGSALPVDSQSRYRRNVARFRNLDDLARRVRKLERLSD</sequence>
<organism>
    <name type="scientific">Alcanivorax borkumensis (strain ATCC 700651 / DSM 11573 / NCIMB 13689 / SK2)</name>
    <dbReference type="NCBI Taxonomy" id="393595"/>
    <lineage>
        <taxon>Bacteria</taxon>
        <taxon>Pseudomonadati</taxon>
        <taxon>Pseudomonadota</taxon>
        <taxon>Gammaproteobacteria</taxon>
        <taxon>Oceanospirillales</taxon>
        <taxon>Alcanivoracaceae</taxon>
        <taxon>Alcanivorax</taxon>
    </lineage>
</organism>
<evidence type="ECO:0000255" key="1">
    <source>
        <dbReference type="HAMAP-Rule" id="MF_00523"/>
    </source>
</evidence>
<proteinExistence type="inferred from homology"/>
<feature type="chain" id="PRO_0000264342" description="UDP-3-O-acylglucosamine N-acyltransferase">
    <location>
        <begin position="1"/>
        <end position="336"/>
    </location>
</feature>
<feature type="active site" description="Proton acceptor" evidence="1">
    <location>
        <position position="237"/>
    </location>
</feature>
<reference key="1">
    <citation type="journal article" date="2006" name="Nat. Biotechnol.">
        <title>Genome sequence of the ubiquitous hydrocarbon-degrading marine bacterium Alcanivorax borkumensis.</title>
        <authorList>
            <person name="Schneiker S."/>
            <person name="Martins dos Santos V.A.P."/>
            <person name="Bartels D."/>
            <person name="Bekel T."/>
            <person name="Brecht M."/>
            <person name="Buhrmester J."/>
            <person name="Chernikova T.N."/>
            <person name="Denaro R."/>
            <person name="Ferrer M."/>
            <person name="Gertler C."/>
            <person name="Goesmann A."/>
            <person name="Golyshina O.V."/>
            <person name="Kaminski F."/>
            <person name="Khachane A.N."/>
            <person name="Lang S."/>
            <person name="Linke B."/>
            <person name="McHardy A.C."/>
            <person name="Meyer F."/>
            <person name="Nechitaylo T."/>
            <person name="Puehler A."/>
            <person name="Regenhardt D."/>
            <person name="Rupp O."/>
            <person name="Sabirova J.S."/>
            <person name="Selbitschka W."/>
            <person name="Yakimov M.M."/>
            <person name="Timmis K.N."/>
            <person name="Vorhoelter F.-J."/>
            <person name="Weidner S."/>
            <person name="Kaiser O."/>
            <person name="Golyshin P.N."/>
        </authorList>
    </citation>
    <scope>NUCLEOTIDE SEQUENCE [LARGE SCALE GENOMIC DNA]</scope>
    <source>
        <strain>ATCC 700651 / DSM 11573 / NCIMB 13689 / SK2</strain>
    </source>
</reference>